<sequence length="605" mass="67951">MAKVDTTERLAELRKLMKERNVDIYMVPSEDSHQSEYIAPCDARRGSAGYAVITHDKAALATDGRYFNQAEKQLDGNWELLKQGIQDVPTIQDWTADQVEGGKVVAVDPSVVTAADARKLADKIKKKGGEYKAVDDNLVDKIWSDRPSRPHEKVIVQPIEFSGKSFEDKIEDLRKELEKKKSLGFVVSMLDEIAWLFNLRGSDIPYNPVFFSYAVVTPTTVTLYVDDHKLPEEVKKHLGDKVTIRPYNAIFEELTTLSKEAFTKDKADATSKFLTSSRASWALNKALGGEDRVEETRSPVGDAKAVKNEVELEGMRQCHLRDGAALSEYFAWLEDQLINKKAELDEVDGADKLEAIRKKHDKFMGLSFDTISSTGANAAVIHYKPEKGECAVIDAKAIYLCDSGAQYRDGTTDTTRTVHFTEPTEMEKKAYTLVLKGNMALERVKFPKGTTGFALDSLARQFLWAEGLDYRHGTGHGVGSFLNVHEGPIGIGTRVQYSEVSLAVGNVVSDEPGYYEDGKFGIRIENMIMVKEVETSHKFGDKPYLGFEHVTMTPHCRNLVDMSLLGEDEKQFINDYHKEVYEKTSGYFEDDALTLKWLKRETAPY</sequence>
<proteinExistence type="inferred from homology"/>
<evidence type="ECO:0000250" key="1"/>
<evidence type="ECO:0000305" key="2"/>
<feature type="chain" id="PRO_0000411793" description="Probable Xaa-Pro aminopeptidase P">
    <location>
        <begin position="1"/>
        <end position="605"/>
    </location>
</feature>
<feature type="binding site" evidence="1">
    <location>
        <position position="402"/>
    </location>
    <ligand>
        <name>Mn(2+)</name>
        <dbReference type="ChEBI" id="CHEBI:29035"/>
        <label>2</label>
    </ligand>
</feature>
<feature type="binding site" evidence="1">
    <location>
        <position position="413"/>
    </location>
    <ligand>
        <name>Mn(2+)</name>
        <dbReference type="ChEBI" id="CHEBI:29035"/>
        <label>1</label>
    </ligand>
</feature>
<feature type="binding site" evidence="1">
    <location>
        <position position="413"/>
    </location>
    <ligand>
        <name>Mn(2+)</name>
        <dbReference type="ChEBI" id="CHEBI:29035"/>
        <label>2</label>
    </ligand>
</feature>
<feature type="binding site" evidence="1">
    <location>
        <position position="511"/>
    </location>
    <ligand>
        <name>Mn(2+)</name>
        <dbReference type="ChEBI" id="CHEBI:29035"/>
        <label>1</label>
    </ligand>
</feature>
<feature type="binding site" evidence="1">
    <location>
        <position position="525"/>
    </location>
    <ligand>
        <name>Mn(2+)</name>
        <dbReference type="ChEBI" id="CHEBI:29035"/>
        <label>1</label>
    </ligand>
</feature>
<feature type="binding site" evidence="1">
    <location>
        <position position="525"/>
    </location>
    <ligand>
        <name>Mn(2+)</name>
        <dbReference type="ChEBI" id="CHEBI:29035"/>
        <label>2</label>
    </ligand>
</feature>
<keyword id="KW-0031">Aminopeptidase</keyword>
<keyword id="KW-0378">Hydrolase</keyword>
<keyword id="KW-0464">Manganese</keyword>
<keyword id="KW-0479">Metal-binding</keyword>
<keyword id="KW-0482">Metalloprotease</keyword>
<keyword id="KW-0645">Protease</keyword>
<keyword id="KW-1185">Reference proteome</keyword>
<reference key="1">
    <citation type="journal article" date="2011" name="Nat. Commun.">
        <title>Effector diversification within compartments of the Leptosphaeria maculans genome affected by Repeat-Induced Point mutations.</title>
        <authorList>
            <person name="Rouxel T."/>
            <person name="Grandaubert J."/>
            <person name="Hane J.K."/>
            <person name="Hoede C."/>
            <person name="van de Wouw A.P."/>
            <person name="Couloux A."/>
            <person name="Dominguez V."/>
            <person name="Anthouard V."/>
            <person name="Bally P."/>
            <person name="Bourras S."/>
            <person name="Cozijnsen A.J."/>
            <person name="Ciuffetti L.M."/>
            <person name="Degrave A."/>
            <person name="Dilmaghani A."/>
            <person name="Duret L."/>
            <person name="Fudal I."/>
            <person name="Goodwin S.B."/>
            <person name="Gout L."/>
            <person name="Glaser N."/>
            <person name="Linglin J."/>
            <person name="Kema G.H.J."/>
            <person name="Lapalu N."/>
            <person name="Lawrence C.B."/>
            <person name="May K."/>
            <person name="Meyer M."/>
            <person name="Ollivier B."/>
            <person name="Poulain J."/>
            <person name="Schoch C.L."/>
            <person name="Simon A."/>
            <person name="Spatafora J.W."/>
            <person name="Stachowiak A."/>
            <person name="Turgeon B.G."/>
            <person name="Tyler B.M."/>
            <person name="Vincent D."/>
            <person name="Weissenbach J."/>
            <person name="Amselem J."/>
            <person name="Quesneville H."/>
            <person name="Oliver R.P."/>
            <person name="Wincker P."/>
            <person name="Balesdent M.-H."/>
            <person name="Howlett B.J."/>
        </authorList>
    </citation>
    <scope>NUCLEOTIDE SEQUENCE [LARGE SCALE GENOMIC DNA]</scope>
    <source>
        <strain>JN3 / isolate v23.1.3 / race Av1-4-5-6-7-8</strain>
    </source>
</reference>
<protein>
    <recommendedName>
        <fullName>Probable Xaa-Pro aminopeptidase P</fullName>
        <shortName>AMPP</shortName>
        <shortName>Aminopeptidase P</shortName>
        <ecNumber>3.4.11.9</ecNumber>
    </recommendedName>
    <alternativeName>
        <fullName>Aminoacylproline aminopeptidase</fullName>
    </alternativeName>
    <alternativeName>
        <fullName>Prolidase</fullName>
    </alternativeName>
</protein>
<gene>
    <name type="primary">AMPP</name>
    <name type="ORF">Lema_P022290</name>
</gene>
<organism>
    <name type="scientific">Leptosphaeria maculans (strain JN3 / isolate v23.1.3 / race Av1-4-5-6-7-8)</name>
    <name type="common">Blackleg fungus</name>
    <name type="synonym">Phoma lingam</name>
    <dbReference type="NCBI Taxonomy" id="985895"/>
    <lineage>
        <taxon>Eukaryota</taxon>
        <taxon>Fungi</taxon>
        <taxon>Dikarya</taxon>
        <taxon>Ascomycota</taxon>
        <taxon>Pezizomycotina</taxon>
        <taxon>Dothideomycetes</taxon>
        <taxon>Pleosporomycetidae</taxon>
        <taxon>Pleosporales</taxon>
        <taxon>Pleosporineae</taxon>
        <taxon>Leptosphaeriaceae</taxon>
        <taxon>Plenodomus</taxon>
        <taxon>Plenodomus lingam/Leptosphaeria maculans species complex</taxon>
    </lineage>
</organism>
<comment type="function">
    <text evidence="1">Catalyzes the removal of a penultimate prolyl residue from the N-termini of peptides.</text>
</comment>
<comment type="catalytic activity">
    <reaction>
        <text>Release of any N-terminal amino acid, including proline, that is linked to proline, even from a dipeptide or tripeptide.</text>
        <dbReference type="EC" id="3.4.11.9"/>
    </reaction>
</comment>
<comment type="cofactor">
    <cofactor evidence="1">
        <name>Mn(2+)</name>
        <dbReference type="ChEBI" id="CHEBI:29035"/>
    </cofactor>
    <text evidence="1">Binds 2 manganese ions per subunit.</text>
</comment>
<comment type="similarity">
    <text evidence="2">Belongs to the peptidase M24B family.</text>
</comment>
<name>AMPP1_LEPMJ</name>
<accession>E5ABQ8</accession>
<dbReference type="EC" id="3.4.11.9"/>
<dbReference type="EMBL" id="FP929138">
    <property type="protein sequence ID" value="CBY01099.1"/>
    <property type="molecule type" value="Genomic_DNA"/>
</dbReference>
<dbReference type="RefSeq" id="XP_003844578.1">
    <property type="nucleotide sequence ID" value="XM_003844530.1"/>
</dbReference>
<dbReference type="SMR" id="E5ABQ8"/>
<dbReference type="FunCoup" id="E5ABQ8">
    <property type="interactions" value="362"/>
</dbReference>
<dbReference type="STRING" id="985895.E5ABQ8"/>
<dbReference type="EnsemblFungi" id="CBY01099">
    <property type="protein sequence ID" value="CBY01099"/>
    <property type="gene ID" value="LEMA_P022290.1"/>
</dbReference>
<dbReference type="VEuPathDB" id="FungiDB:LEMA_P022290.1"/>
<dbReference type="eggNOG" id="KOG2413">
    <property type="taxonomic scope" value="Eukaryota"/>
</dbReference>
<dbReference type="HOGENOM" id="CLU_011781_2_3_1"/>
<dbReference type="InParanoid" id="E5ABQ8"/>
<dbReference type="OMA" id="EPGMILS"/>
<dbReference type="OrthoDB" id="9995434at2759"/>
<dbReference type="Proteomes" id="UP000002668">
    <property type="component" value="Genome"/>
</dbReference>
<dbReference type="GO" id="GO:0005737">
    <property type="term" value="C:cytoplasm"/>
    <property type="evidence" value="ECO:0007669"/>
    <property type="project" value="UniProtKB-ARBA"/>
</dbReference>
<dbReference type="GO" id="GO:0046872">
    <property type="term" value="F:metal ion binding"/>
    <property type="evidence" value="ECO:0007669"/>
    <property type="project" value="UniProtKB-KW"/>
</dbReference>
<dbReference type="GO" id="GO:0070006">
    <property type="term" value="F:metalloaminopeptidase activity"/>
    <property type="evidence" value="ECO:0007669"/>
    <property type="project" value="InterPro"/>
</dbReference>
<dbReference type="GO" id="GO:0006508">
    <property type="term" value="P:proteolysis"/>
    <property type="evidence" value="ECO:0007669"/>
    <property type="project" value="UniProtKB-KW"/>
</dbReference>
<dbReference type="CDD" id="cd01085">
    <property type="entry name" value="APP"/>
    <property type="match status" value="1"/>
</dbReference>
<dbReference type="FunFam" id="3.40.350.10:FF:000010">
    <property type="entry name" value="Probable Xaa-Pro aminopeptidase P"/>
    <property type="match status" value="1"/>
</dbReference>
<dbReference type="FunFam" id="3.90.230.10:FF:000007">
    <property type="entry name" value="Xaa-Pro aminopeptidase P"/>
    <property type="match status" value="1"/>
</dbReference>
<dbReference type="FunFam" id="3.40.350.10:FF:000003">
    <property type="entry name" value="Xaa-pro aminopeptidase P"/>
    <property type="match status" value="1"/>
</dbReference>
<dbReference type="Gene3D" id="3.90.230.10">
    <property type="entry name" value="Creatinase/methionine aminopeptidase superfamily"/>
    <property type="match status" value="1"/>
</dbReference>
<dbReference type="Gene3D" id="3.40.350.10">
    <property type="entry name" value="Creatinase/prolidase N-terminal domain"/>
    <property type="match status" value="2"/>
</dbReference>
<dbReference type="InterPro" id="IPR029149">
    <property type="entry name" value="Creatin/AminoP/Spt16_N"/>
</dbReference>
<dbReference type="InterPro" id="IPR036005">
    <property type="entry name" value="Creatinase/aminopeptidase-like"/>
</dbReference>
<dbReference type="InterPro" id="IPR000587">
    <property type="entry name" value="Creatinase_N"/>
</dbReference>
<dbReference type="InterPro" id="IPR000994">
    <property type="entry name" value="Pept_M24"/>
</dbReference>
<dbReference type="InterPro" id="IPR033740">
    <property type="entry name" value="Pept_M24B"/>
</dbReference>
<dbReference type="InterPro" id="IPR032416">
    <property type="entry name" value="Peptidase_M24_C"/>
</dbReference>
<dbReference type="InterPro" id="IPR001131">
    <property type="entry name" value="Peptidase_M24B_aminopep-P_CS"/>
</dbReference>
<dbReference type="InterPro" id="IPR050422">
    <property type="entry name" value="X-Pro_aminopeptidase_P"/>
</dbReference>
<dbReference type="PANTHER" id="PTHR43763">
    <property type="entry name" value="XAA-PRO AMINOPEPTIDASE 1"/>
    <property type="match status" value="1"/>
</dbReference>
<dbReference type="PANTHER" id="PTHR43763:SF6">
    <property type="entry name" value="XAA-PRO AMINOPEPTIDASE 1"/>
    <property type="match status" value="1"/>
</dbReference>
<dbReference type="Pfam" id="PF01321">
    <property type="entry name" value="Creatinase_N"/>
    <property type="match status" value="1"/>
</dbReference>
<dbReference type="Pfam" id="PF16189">
    <property type="entry name" value="Creatinase_N_2"/>
    <property type="match status" value="1"/>
</dbReference>
<dbReference type="Pfam" id="PF00557">
    <property type="entry name" value="Peptidase_M24"/>
    <property type="match status" value="1"/>
</dbReference>
<dbReference type="Pfam" id="PF16188">
    <property type="entry name" value="Peptidase_M24_C"/>
    <property type="match status" value="1"/>
</dbReference>
<dbReference type="SUPFAM" id="SSF55920">
    <property type="entry name" value="Creatinase/aminopeptidase"/>
    <property type="match status" value="1"/>
</dbReference>
<dbReference type="SUPFAM" id="SSF53092">
    <property type="entry name" value="Creatinase/prolidase N-terminal domain"/>
    <property type="match status" value="1"/>
</dbReference>
<dbReference type="PROSITE" id="PS00491">
    <property type="entry name" value="PROLINE_PEPTIDASE"/>
    <property type="match status" value="1"/>
</dbReference>